<feature type="chain" id="PRO_0000406698" description="Pentafunctional AROM polypeptide">
    <location>
        <begin position="1"/>
        <end position="1595"/>
    </location>
</feature>
<feature type="region of interest" description="3-dehydroquinate synthase">
    <location>
        <begin position="1"/>
        <end position="384"/>
    </location>
</feature>
<feature type="region of interest" description="EPSP synthase">
    <location>
        <begin position="397"/>
        <end position="842"/>
    </location>
</feature>
<feature type="region of interest" description="Shikimate kinase">
    <location>
        <begin position="866"/>
        <end position="1057"/>
    </location>
</feature>
<feature type="region of interest" description="3-dehydroquinase">
    <location>
        <begin position="1058"/>
        <end position="1278"/>
    </location>
</feature>
<feature type="region of interest" description="Shikimate dehydrogenase">
    <location>
        <begin position="1291"/>
        <end position="1595"/>
    </location>
</feature>
<feature type="active site" description="Proton acceptor; for 3-dehydroquinate synthase activity" evidence="1">
    <location>
        <position position="260"/>
    </location>
</feature>
<feature type="active site" description="Proton acceptor; for 3-dehydroquinate synthase activity" evidence="1">
    <location>
        <position position="275"/>
    </location>
</feature>
<feature type="active site" description="For EPSP synthase activity" evidence="1">
    <location>
        <position position="824"/>
    </location>
</feature>
<feature type="active site" description="Proton acceptor; for 3-dehydroquinate dehydratase activity" evidence="1">
    <location>
        <position position="1181"/>
    </location>
</feature>
<feature type="active site" description="Schiff-base intermediate with substrate; for 3-dehydroquinate dehydratase activity" evidence="1">
    <location>
        <position position="1209"/>
    </location>
</feature>
<feature type="binding site" evidence="1">
    <location>
        <begin position="44"/>
        <end position="46"/>
    </location>
    <ligand>
        <name>NAD(+)</name>
        <dbReference type="ChEBI" id="CHEBI:57540"/>
    </ligand>
</feature>
<feature type="binding site" evidence="1">
    <location>
        <begin position="81"/>
        <end position="84"/>
    </location>
    <ligand>
        <name>NAD(+)</name>
        <dbReference type="ChEBI" id="CHEBI:57540"/>
    </ligand>
</feature>
<feature type="binding site" evidence="1">
    <location>
        <begin position="114"/>
        <end position="116"/>
    </location>
    <ligand>
        <name>NAD(+)</name>
        <dbReference type="ChEBI" id="CHEBI:57540"/>
    </ligand>
</feature>
<feature type="binding site" evidence="1">
    <location>
        <position position="119"/>
    </location>
    <ligand>
        <name>NAD(+)</name>
        <dbReference type="ChEBI" id="CHEBI:57540"/>
    </ligand>
</feature>
<feature type="binding site" evidence="1">
    <location>
        <position position="130"/>
    </location>
    <ligand>
        <name>7-phospho-2-dehydro-3-deoxy-D-arabino-heptonate</name>
        <dbReference type="ChEBI" id="CHEBI:58394"/>
    </ligand>
</feature>
<feature type="binding site" evidence="1">
    <location>
        <begin position="139"/>
        <end position="140"/>
    </location>
    <ligand>
        <name>NAD(+)</name>
        <dbReference type="ChEBI" id="CHEBI:57540"/>
    </ligand>
</feature>
<feature type="binding site" evidence="1">
    <location>
        <position position="146"/>
    </location>
    <ligand>
        <name>7-phospho-2-dehydro-3-deoxy-D-arabino-heptonate</name>
        <dbReference type="ChEBI" id="CHEBI:58394"/>
    </ligand>
</feature>
<feature type="binding site" evidence="1">
    <location>
        <position position="152"/>
    </location>
    <ligand>
        <name>7-phospho-2-dehydro-3-deoxy-D-arabino-heptonate</name>
        <dbReference type="ChEBI" id="CHEBI:58394"/>
    </ligand>
</feature>
<feature type="binding site" evidence="1">
    <location>
        <position position="161"/>
    </location>
    <ligand>
        <name>NAD(+)</name>
        <dbReference type="ChEBI" id="CHEBI:57540"/>
    </ligand>
</feature>
<feature type="binding site" evidence="1">
    <location>
        <position position="162"/>
    </location>
    <ligand>
        <name>7-phospho-2-dehydro-3-deoxy-D-arabino-heptonate</name>
        <dbReference type="ChEBI" id="CHEBI:58394"/>
    </ligand>
</feature>
<feature type="binding site" evidence="1">
    <location>
        <begin position="179"/>
        <end position="182"/>
    </location>
    <ligand>
        <name>NAD(+)</name>
        <dbReference type="ChEBI" id="CHEBI:57540"/>
    </ligand>
</feature>
<feature type="binding site" evidence="1">
    <location>
        <position position="190"/>
    </location>
    <ligand>
        <name>NAD(+)</name>
        <dbReference type="ChEBI" id="CHEBI:57540"/>
    </ligand>
</feature>
<feature type="binding site" evidence="1">
    <location>
        <begin position="194"/>
        <end position="197"/>
    </location>
    <ligand>
        <name>7-phospho-2-dehydro-3-deoxy-D-arabino-heptonate</name>
        <dbReference type="ChEBI" id="CHEBI:58394"/>
    </ligand>
</feature>
<feature type="binding site" evidence="1">
    <location>
        <position position="194"/>
    </location>
    <ligand>
        <name>Zn(2+)</name>
        <dbReference type="ChEBI" id="CHEBI:29105"/>
        <note>catalytic</note>
    </ligand>
</feature>
<feature type="binding site" evidence="1">
    <location>
        <position position="250"/>
    </location>
    <ligand>
        <name>7-phospho-2-dehydro-3-deoxy-D-arabino-heptonate</name>
        <dbReference type="ChEBI" id="CHEBI:58394"/>
    </ligand>
</feature>
<feature type="binding site" evidence="1">
    <location>
        <begin position="264"/>
        <end position="268"/>
    </location>
    <ligand>
        <name>7-phospho-2-dehydro-3-deoxy-D-arabino-heptonate</name>
        <dbReference type="ChEBI" id="CHEBI:58394"/>
    </ligand>
</feature>
<feature type="binding site" evidence="1">
    <location>
        <position position="271"/>
    </location>
    <ligand>
        <name>7-phospho-2-dehydro-3-deoxy-D-arabino-heptonate</name>
        <dbReference type="ChEBI" id="CHEBI:58394"/>
    </ligand>
</feature>
<feature type="binding site" evidence="1">
    <location>
        <position position="271"/>
    </location>
    <ligand>
        <name>Zn(2+)</name>
        <dbReference type="ChEBI" id="CHEBI:29105"/>
        <note>catalytic</note>
    </ligand>
</feature>
<feature type="binding site" evidence="1">
    <location>
        <position position="287"/>
    </location>
    <ligand>
        <name>7-phospho-2-dehydro-3-deoxy-D-arabino-heptonate</name>
        <dbReference type="ChEBI" id="CHEBI:58394"/>
    </ligand>
</feature>
<feature type="binding site" evidence="1">
    <location>
        <position position="287"/>
    </location>
    <ligand>
        <name>Zn(2+)</name>
        <dbReference type="ChEBI" id="CHEBI:29105"/>
        <note>catalytic</note>
    </ligand>
</feature>
<feature type="binding site" evidence="1">
    <location>
        <position position="356"/>
    </location>
    <ligand>
        <name>7-phospho-2-dehydro-3-deoxy-D-arabino-heptonate</name>
        <dbReference type="ChEBI" id="CHEBI:58394"/>
    </ligand>
</feature>
<feature type="binding site" evidence="1">
    <location>
        <begin position="872"/>
        <end position="879"/>
    </location>
    <ligand>
        <name>ATP</name>
        <dbReference type="ChEBI" id="CHEBI:30616"/>
    </ligand>
</feature>
<sequence length="1595" mass="173398">MGVPTKISILGRESIVADFGIWRNYVAKDLLSSCSSSTYILISDTNLTPLYLEGFQRSFEDAATNVSPKPRLLTYEIPPGESSKSRETKADIEDWMLARQPPCGRDTVIIALGGGVIGDLIGFVAATYMRGVRFVQVPTTLLAMVDSSIGGKTAIDTPNGKNLIGAIWQPQRIYLDMEFLNTLPEREFINGMAEVIKTAAISSEEKFAALERDAETILAAVKSKNTPERPRFSGIEETLKRTILSSAEFKAQVVTADEREGGLRNLLNFGHSIGHSIEAILAPQVLHGECVSIGMVKEAELARHLGILNNVSVSRISKCLASYGLPTSLKDQRIKKLTAGKHCSVEQLIAYMGVDKKNDGPKKKVVLLSAIGRTHEPRASTVSNEEIQIVLAPSIEVSPGVPKGLDVTCTPPGSKSISNRALVLAALGSGTCRLKNLLHSDDTEVMLNALERLGAATFSWEDEGEVLVVSGKGGRMEASPSELYLGNAGTASRFLTTVATLARKSSVDSSVLTGNARMKQRPIGDLVDALAANGASIEYLENLGCLPLKIAASGGFAGGEINLAAKVSSQYVSSLLMCAPYAKTPVTLRLMGGKPISQSYIDMTTAMMRSFGVEVKKSETEEHTYHIPLGFYTNPVEYIVESDASSATYPLAAAAITGTSCTVPNIGSKSLQGDARFAVDVLRPMGCAVDQSDFSTRVTGPPGGILSPLPNIDMEPMTDAFLTASVLASVARGKGSNHTTRIFGIANQRVKECNRIKAMKDELAQFGVVCREHDDGLEIDGIDRATLHHPSDGVYCYDDHRVAMSFSVLSLVTPEPTLILEKECVGKTWPGWWDSLAQTFKVKLDGKEVGKRIETNPIVHVNKSAASIFIIGMRGAGKTTSGFWVSKALQRPFIDLDDELERTEGMTIPEIIKQRGWGGFREAELSLLRRVMTEKPTGYIFACGGGVVETPEARKLLTQYHKTTGNVILVMRDIKEIMDFLKIDKTRPAYVEDMMSVWLRRKPWYEECSNVQYYSRLTGLDGMTQVSGGFNRFLKVITGEVDSLAKMRRKENTFFVSLTLPDLGLAAHILKEVTLGSDAVELRVDLLKDPQSDNEIPSVDYVAEQISVLRSRASVPLVFTIRTKGQGGRFPDDAYDAALQLYRLAVRMGSEFVDLEISFPEQLLRTVTEMKGFSKIIASHHDPKGQLSWVNGSWIQFYNKALQYGDVIKLVGVARSIDDNISLKKFKTWAEEKHNVPIIAINMGDKGQLSRMLNGFMTPVSHPSLPFKAAPGQLSAREIRKGLSLIGEIKAKKFAVIGNPVSASRSPAMHNTLFRQMGLPHTYGTLETDNPEVAKEFIRSPDFGGASVTIPLKLSIMPLLDEIAPEAMSIGAVNTIVCAPPAPDGKSQTPRLIGHNTDWQGMVRCLSDAGAYAAATPTTASAGLVIGGGGTARAAIFALQNMGYSPIYVLGRSPDKLSSMTSTFHTDHDIRILEDLKALESLPTVAIGTIPGDKPIEPHMREILCRLFDLCEKANSDTEQARGVSTKRILLEMAYKPSVTSLMQLASDSGWTVLPGLEALVAQGVYQCEYWTNITPVYEYARNAVMGVLPSEDIS</sequence>
<keyword id="KW-0028">Amino-acid biosynthesis</keyword>
<keyword id="KW-0057">Aromatic amino acid biosynthesis</keyword>
<keyword id="KW-0067">ATP-binding</keyword>
<keyword id="KW-0963">Cytoplasm</keyword>
<keyword id="KW-0418">Kinase</keyword>
<keyword id="KW-0456">Lyase</keyword>
<keyword id="KW-0479">Metal-binding</keyword>
<keyword id="KW-0511">Multifunctional enzyme</keyword>
<keyword id="KW-0521">NADP</keyword>
<keyword id="KW-0547">Nucleotide-binding</keyword>
<keyword id="KW-0560">Oxidoreductase</keyword>
<keyword id="KW-1185">Reference proteome</keyword>
<keyword id="KW-0808">Transferase</keyword>
<keyword id="KW-0862">Zinc</keyword>
<organism>
    <name type="scientific">Ajellomyces capsulatus (strain H143)</name>
    <name type="common">Darling's disease fungus</name>
    <name type="synonym">Histoplasma capsulatum</name>
    <dbReference type="NCBI Taxonomy" id="544712"/>
    <lineage>
        <taxon>Eukaryota</taxon>
        <taxon>Fungi</taxon>
        <taxon>Dikarya</taxon>
        <taxon>Ascomycota</taxon>
        <taxon>Pezizomycotina</taxon>
        <taxon>Eurotiomycetes</taxon>
        <taxon>Eurotiomycetidae</taxon>
        <taxon>Onygenales</taxon>
        <taxon>Ajellomycetaceae</taxon>
        <taxon>Histoplasma</taxon>
    </lineage>
</organism>
<reference key="1">
    <citation type="submission" date="2009-05" db="EMBL/GenBank/DDBJ databases">
        <title>The genome sequence of Ajellomyces capsulatus strain H143.</title>
        <authorList>
            <person name="Champion M."/>
            <person name="Cuomo C.A."/>
            <person name="Ma L.-J."/>
            <person name="Henn M.R."/>
            <person name="Sil A."/>
            <person name="Goldman B."/>
            <person name="Young S.K."/>
            <person name="Kodira C.D."/>
            <person name="Zeng Q."/>
            <person name="Koehrsen M."/>
            <person name="Alvarado L."/>
            <person name="Berlin A.M."/>
            <person name="Borenstein D."/>
            <person name="Chen Z."/>
            <person name="Engels R."/>
            <person name="Freedman E."/>
            <person name="Gellesch M."/>
            <person name="Goldberg J."/>
            <person name="Griggs A."/>
            <person name="Gujja S."/>
            <person name="Heiman D.I."/>
            <person name="Hepburn T.A."/>
            <person name="Howarth C."/>
            <person name="Jen D."/>
            <person name="Larson L."/>
            <person name="Lewis B."/>
            <person name="Mehta T."/>
            <person name="Park D."/>
            <person name="Pearson M."/>
            <person name="Roberts A."/>
            <person name="Saif S."/>
            <person name="Shea T.D."/>
            <person name="Shenoy N."/>
            <person name="Sisk P."/>
            <person name="Stolte C."/>
            <person name="Sykes S."/>
            <person name="Walk T."/>
            <person name="White J."/>
            <person name="Yandava C."/>
            <person name="Klein B."/>
            <person name="McEwen J.G."/>
            <person name="Puccia R."/>
            <person name="Goldman G.H."/>
            <person name="Felipe M.S."/>
            <person name="Nino-Vega G."/>
            <person name="San-Blas G."/>
            <person name="Taylor J.W."/>
            <person name="Mendoza L."/>
            <person name="Galagan J.E."/>
            <person name="Nusbaum C."/>
            <person name="Birren B.W."/>
        </authorList>
    </citation>
    <scope>NUCLEOTIDE SEQUENCE [LARGE SCALE GENOMIC DNA]</scope>
    <source>
        <strain>H143</strain>
    </source>
</reference>
<evidence type="ECO:0000255" key="1">
    <source>
        <dbReference type="HAMAP-Rule" id="MF_03143"/>
    </source>
</evidence>
<gene>
    <name type="ORF">HCDG_03716</name>
</gene>
<comment type="function">
    <text evidence="1">The AROM polypeptide catalyzes 5 consecutive enzymatic reactions in prechorismate polyaromatic amino acid biosynthesis.</text>
</comment>
<comment type="catalytic activity">
    <reaction evidence="1">
        <text>7-phospho-2-dehydro-3-deoxy-D-arabino-heptonate = 3-dehydroquinate + phosphate</text>
        <dbReference type="Rhea" id="RHEA:21968"/>
        <dbReference type="ChEBI" id="CHEBI:32364"/>
        <dbReference type="ChEBI" id="CHEBI:43474"/>
        <dbReference type="ChEBI" id="CHEBI:58394"/>
        <dbReference type="EC" id="4.2.3.4"/>
    </reaction>
</comment>
<comment type="catalytic activity">
    <reaction evidence="1">
        <text>3-dehydroquinate = 3-dehydroshikimate + H2O</text>
        <dbReference type="Rhea" id="RHEA:21096"/>
        <dbReference type="ChEBI" id="CHEBI:15377"/>
        <dbReference type="ChEBI" id="CHEBI:16630"/>
        <dbReference type="ChEBI" id="CHEBI:32364"/>
        <dbReference type="EC" id="4.2.1.10"/>
    </reaction>
</comment>
<comment type="catalytic activity">
    <reaction evidence="1">
        <text>shikimate + NADP(+) = 3-dehydroshikimate + NADPH + H(+)</text>
        <dbReference type="Rhea" id="RHEA:17737"/>
        <dbReference type="ChEBI" id="CHEBI:15378"/>
        <dbReference type="ChEBI" id="CHEBI:16630"/>
        <dbReference type="ChEBI" id="CHEBI:36208"/>
        <dbReference type="ChEBI" id="CHEBI:57783"/>
        <dbReference type="ChEBI" id="CHEBI:58349"/>
        <dbReference type="EC" id="1.1.1.25"/>
    </reaction>
</comment>
<comment type="catalytic activity">
    <reaction evidence="1">
        <text>shikimate + ATP = 3-phosphoshikimate + ADP + H(+)</text>
        <dbReference type="Rhea" id="RHEA:13121"/>
        <dbReference type="ChEBI" id="CHEBI:15378"/>
        <dbReference type="ChEBI" id="CHEBI:30616"/>
        <dbReference type="ChEBI" id="CHEBI:36208"/>
        <dbReference type="ChEBI" id="CHEBI:145989"/>
        <dbReference type="ChEBI" id="CHEBI:456216"/>
        <dbReference type="EC" id="2.7.1.71"/>
    </reaction>
</comment>
<comment type="catalytic activity">
    <reaction evidence="1">
        <text>3-phosphoshikimate + phosphoenolpyruvate = 5-O-(1-carboxyvinyl)-3-phosphoshikimate + phosphate</text>
        <dbReference type="Rhea" id="RHEA:21256"/>
        <dbReference type="ChEBI" id="CHEBI:43474"/>
        <dbReference type="ChEBI" id="CHEBI:57701"/>
        <dbReference type="ChEBI" id="CHEBI:58702"/>
        <dbReference type="ChEBI" id="CHEBI:145989"/>
        <dbReference type="EC" id="2.5.1.19"/>
    </reaction>
</comment>
<comment type="cofactor">
    <cofactor>
        <name>Zn(2+)</name>
        <dbReference type="ChEBI" id="CHEBI:29105"/>
    </cofactor>
    <text>Binds 2 Zn(2+) ions per subunit.</text>
</comment>
<comment type="pathway">
    <text evidence="1">Metabolic intermediate biosynthesis; chorismate biosynthesis; chorismate from D-erythrose 4-phosphate and phosphoenolpyruvate: step 2/7.</text>
</comment>
<comment type="pathway">
    <text evidence="1">Metabolic intermediate biosynthesis; chorismate biosynthesis; chorismate from D-erythrose 4-phosphate and phosphoenolpyruvate: step 3/7.</text>
</comment>
<comment type="pathway">
    <text evidence="1">Metabolic intermediate biosynthesis; chorismate biosynthesis; chorismate from D-erythrose 4-phosphate and phosphoenolpyruvate: step 4/7.</text>
</comment>
<comment type="pathway">
    <text evidence="1">Metabolic intermediate biosynthesis; chorismate biosynthesis; chorismate from D-erythrose 4-phosphate and phosphoenolpyruvate: step 5/7.</text>
</comment>
<comment type="pathway">
    <text evidence="1">Metabolic intermediate biosynthesis; chorismate biosynthesis; chorismate from D-erythrose 4-phosphate and phosphoenolpyruvate: step 6/7.</text>
</comment>
<comment type="subunit">
    <text evidence="1">Homodimer.</text>
</comment>
<comment type="subcellular location">
    <subcellularLocation>
        <location evidence="1">Cytoplasm</location>
    </subcellularLocation>
</comment>
<comment type="similarity">
    <text evidence="1">In the N-terminal section; belongs to the sugar phosphate cyclases superfamily. Dehydroquinate synthase family.</text>
</comment>
<comment type="similarity">
    <text evidence="1">In the 2nd section; belongs to the EPSP synthase family.</text>
</comment>
<comment type="similarity">
    <text evidence="1">In the 3rd section; belongs to the shikimate kinase family.</text>
</comment>
<comment type="similarity">
    <text evidence="1">In the 4th section; belongs to the type-I 3-dehydroquinase family.</text>
</comment>
<comment type="similarity">
    <text evidence="1">In the C-terminal section; belongs to the shikimate dehydrogenase family.</text>
</comment>
<name>ARO1_AJECH</name>
<proteinExistence type="inferred from homology"/>
<dbReference type="EC" id="4.2.3.4" evidence="1"/>
<dbReference type="EC" id="2.5.1.19" evidence="1"/>
<dbReference type="EC" id="2.7.1.71" evidence="1"/>
<dbReference type="EC" id="4.2.1.10" evidence="1"/>
<dbReference type="EC" id="1.1.1.25" evidence="1"/>
<dbReference type="EMBL" id="GG692422">
    <property type="protein sequence ID" value="EER42257.1"/>
    <property type="molecule type" value="Genomic_DNA"/>
</dbReference>
<dbReference type="SMR" id="C6HCG7"/>
<dbReference type="STRING" id="544712.C6HCG7"/>
<dbReference type="VEuPathDB" id="FungiDB:HCDG_03716"/>
<dbReference type="eggNOG" id="KOG0692">
    <property type="taxonomic scope" value="Eukaryota"/>
</dbReference>
<dbReference type="HOGENOM" id="CLU_001201_1_2_1"/>
<dbReference type="OMA" id="SWANMSW"/>
<dbReference type="OrthoDB" id="3817at299071"/>
<dbReference type="UniPathway" id="UPA00053">
    <property type="reaction ID" value="UER00085"/>
</dbReference>
<dbReference type="UniPathway" id="UPA00053">
    <property type="reaction ID" value="UER00086"/>
</dbReference>
<dbReference type="UniPathway" id="UPA00053">
    <property type="reaction ID" value="UER00087"/>
</dbReference>
<dbReference type="UniPathway" id="UPA00053">
    <property type="reaction ID" value="UER00088"/>
</dbReference>
<dbReference type="UniPathway" id="UPA00053">
    <property type="reaction ID" value="UER00089"/>
</dbReference>
<dbReference type="Proteomes" id="UP000002624">
    <property type="component" value="Unassembled WGS sequence"/>
</dbReference>
<dbReference type="GO" id="GO:0005737">
    <property type="term" value="C:cytoplasm"/>
    <property type="evidence" value="ECO:0007669"/>
    <property type="project" value="UniProtKB-SubCell"/>
</dbReference>
<dbReference type="GO" id="GO:0003855">
    <property type="term" value="F:3-dehydroquinate dehydratase activity"/>
    <property type="evidence" value="ECO:0007669"/>
    <property type="project" value="UniProtKB-UniRule"/>
</dbReference>
<dbReference type="GO" id="GO:0003856">
    <property type="term" value="F:3-dehydroquinate synthase activity"/>
    <property type="evidence" value="ECO:0007669"/>
    <property type="project" value="UniProtKB-UniRule"/>
</dbReference>
<dbReference type="GO" id="GO:0003866">
    <property type="term" value="F:3-phosphoshikimate 1-carboxyvinyltransferase activity"/>
    <property type="evidence" value="ECO:0007669"/>
    <property type="project" value="UniProtKB-UniRule"/>
</dbReference>
<dbReference type="GO" id="GO:0005524">
    <property type="term" value="F:ATP binding"/>
    <property type="evidence" value="ECO:0007669"/>
    <property type="project" value="UniProtKB-UniRule"/>
</dbReference>
<dbReference type="GO" id="GO:0046872">
    <property type="term" value="F:metal ion binding"/>
    <property type="evidence" value="ECO:0007669"/>
    <property type="project" value="UniProtKB-UniRule"/>
</dbReference>
<dbReference type="GO" id="GO:0004764">
    <property type="term" value="F:shikimate 3-dehydrogenase (NADP+) activity"/>
    <property type="evidence" value="ECO:0007669"/>
    <property type="project" value="UniProtKB-UniRule"/>
</dbReference>
<dbReference type="GO" id="GO:0004765">
    <property type="term" value="F:shikimate kinase activity"/>
    <property type="evidence" value="ECO:0007669"/>
    <property type="project" value="UniProtKB-UniRule"/>
</dbReference>
<dbReference type="GO" id="GO:0008652">
    <property type="term" value="P:amino acid biosynthetic process"/>
    <property type="evidence" value="ECO:0007669"/>
    <property type="project" value="UniProtKB-KW"/>
</dbReference>
<dbReference type="GO" id="GO:0009073">
    <property type="term" value="P:aromatic amino acid family biosynthetic process"/>
    <property type="evidence" value="ECO:0007669"/>
    <property type="project" value="UniProtKB-UniRule"/>
</dbReference>
<dbReference type="GO" id="GO:0009423">
    <property type="term" value="P:chorismate biosynthetic process"/>
    <property type="evidence" value="ECO:0007669"/>
    <property type="project" value="UniProtKB-UniRule"/>
</dbReference>
<dbReference type="CDD" id="cd00502">
    <property type="entry name" value="DHQase_I"/>
    <property type="match status" value="1"/>
</dbReference>
<dbReference type="CDD" id="cd08195">
    <property type="entry name" value="DHQS"/>
    <property type="match status" value="1"/>
</dbReference>
<dbReference type="CDD" id="cd01556">
    <property type="entry name" value="EPSP_synthase"/>
    <property type="match status" value="1"/>
</dbReference>
<dbReference type="CDD" id="cd01065">
    <property type="entry name" value="NAD_bind_Shikimate_DH"/>
    <property type="match status" value="1"/>
</dbReference>
<dbReference type="CDD" id="cd00464">
    <property type="entry name" value="SK"/>
    <property type="match status" value="1"/>
</dbReference>
<dbReference type="FunFam" id="1.20.1090.10:FF:000007">
    <property type="entry name" value="Pentafunctional AROM polypeptide"/>
    <property type="match status" value="1"/>
</dbReference>
<dbReference type="FunFam" id="3.20.20.70:FF:000135">
    <property type="entry name" value="Pentafunctional AROM polypeptide"/>
    <property type="match status" value="1"/>
</dbReference>
<dbReference type="FunFam" id="3.40.50.1970:FF:000007">
    <property type="entry name" value="Pentafunctional AROM polypeptide"/>
    <property type="match status" value="1"/>
</dbReference>
<dbReference type="FunFam" id="3.40.50.300:FF:001256">
    <property type="entry name" value="Pentafunctional AROM polypeptide"/>
    <property type="match status" value="1"/>
</dbReference>
<dbReference type="FunFam" id="3.65.10.10:FF:000007">
    <property type="entry name" value="Pentafunctional AROM polypeptide"/>
    <property type="match status" value="1"/>
</dbReference>
<dbReference type="FunFam" id="3.65.10.10:FF:000008">
    <property type="entry name" value="Pentafunctional AROM polypeptide"/>
    <property type="match status" value="1"/>
</dbReference>
<dbReference type="Gene3D" id="3.40.50.1970">
    <property type="match status" value="1"/>
</dbReference>
<dbReference type="Gene3D" id="3.20.20.70">
    <property type="entry name" value="Aldolase class I"/>
    <property type="match status" value="1"/>
</dbReference>
<dbReference type="Gene3D" id="1.20.1090.10">
    <property type="entry name" value="Dehydroquinate synthase-like - alpha domain"/>
    <property type="match status" value="1"/>
</dbReference>
<dbReference type="Gene3D" id="3.65.10.10">
    <property type="entry name" value="Enolpyruvate transferase domain"/>
    <property type="match status" value="2"/>
</dbReference>
<dbReference type="Gene3D" id="3.40.50.10860">
    <property type="entry name" value="Leucine Dehydrogenase, chain A, domain 1"/>
    <property type="match status" value="1"/>
</dbReference>
<dbReference type="Gene3D" id="3.40.50.720">
    <property type="entry name" value="NAD(P)-binding Rossmann-like Domain"/>
    <property type="match status" value="1"/>
</dbReference>
<dbReference type="Gene3D" id="3.40.50.300">
    <property type="entry name" value="P-loop containing nucleotide triphosphate hydrolases"/>
    <property type="match status" value="1"/>
</dbReference>
<dbReference type="HAMAP" id="MF_00210">
    <property type="entry name" value="EPSP_synth"/>
    <property type="match status" value="1"/>
</dbReference>
<dbReference type="HAMAP" id="MF_03143">
    <property type="entry name" value="Pentafunct_AroM"/>
    <property type="match status" value="1"/>
</dbReference>
<dbReference type="HAMAP" id="MF_00109">
    <property type="entry name" value="Shikimate_kinase"/>
    <property type="match status" value="1"/>
</dbReference>
<dbReference type="InterPro" id="IPR018508">
    <property type="entry name" value="3-dehydroquinate_DH_AS"/>
</dbReference>
<dbReference type="InterPro" id="IPR013785">
    <property type="entry name" value="Aldolase_TIM"/>
</dbReference>
<dbReference type="InterPro" id="IPR046346">
    <property type="entry name" value="Aminoacid_DH-like_N_sf"/>
</dbReference>
<dbReference type="InterPro" id="IPR016037">
    <property type="entry name" value="DHQ_synth_AroB"/>
</dbReference>
<dbReference type="InterPro" id="IPR030960">
    <property type="entry name" value="DHQS/DOIS_N"/>
</dbReference>
<dbReference type="InterPro" id="IPR056179">
    <property type="entry name" value="DHQS_C"/>
</dbReference>
<dbReference type="InterPro" id="IPR001381">
    <property type="entry name" value="DHquinase_I"/>
</dbReference>
<dbReference type="InterPro" id="IPR001986">
    <property type="entry name" value="Enolpyruvate_Tfrase_dom"/>
</dbReference>
<dbReference type="InterPro" id="IPR036968">
    <property type="entry name" value="Enolpyruvate_Tfrase_sf"/>
</dbReference>
<dbReference type="InterPro" id="IPR006264">
    <property type="entry name" value="EPSP_synthase"/>
</dbReference>
<dbReference type="InterPro" id="IPR023193">
    <property type="entry name" value="EPSP_synthase_CS"/>
</dbReference>
<dbReference type="InterPro" id="IPR036291">
    <property type="entry name" value="NAD(P)-bd_dom_sf"/>
</dbReference>
<dbReference type="InterPro" id="IPR027417">
    <property type="entry name" value="P-loop_NTPase"/>
</dbReference>
<dbReference type="InterPro" id="IPR008289">
    <property type="entry name" value="Pentafunct_AroM"/>
</dbReference>
<dbReference type="InterPro" id="IPR013792">
    <property type="entry name" value="RNA3'P_cycl/enolpyr_Trfase_a/b"/>
</dbReference>
<dbReference type="InterPro" id="IPR041121">
    <property type="entry name" value="SDH_C"/>
</dbReference>
<dbReference type="InterPro" id="IPR031322">
    <property type="entry name" value="Shikimate/glucono_kinase"/>
</dbReference>
<dbReference type="InterPro" id="IPR013708">
    <property type="entry name" value="Shikimate_DH-bd_N"/>
</dbReference>
<dbReference type="InterPro" id="IPR010110">
    <property type="entry name" value="Shikimate_DH_AroM-type"/>
</dbReference>
<dbReference type="InterPro" id="IPR000623">
    <property type="entry name" value="Shikimate_kinase/TSH1"/>
</dbReference>
<dbReference type="InterPro" id="IPR023000">
    <property type="entry name" value="Shikimate_kinase_CS"/>
</dbReference>
<dbReference type="NCBIfam" id="TIGR01356">
    <property type="entry name" value="aroA"/>
    <property type="match status" value="1"/>
</dbReference>
<dbReference type="NCBIfam" id="TIGR01357">
    <property type="entry name" value="aroB"/>
    <property type="match status" value="1"/>
</dbReference>
<dbReference type="NCBIfam" id="TIGR01093">
    <property type="entry name" value="aroD"/>
    <property type="match status" value="1"/>
</dbReference>
<dbReference type="NCBIfam" id="TIGR01809">
    <property type="entry name" value="Shik-DH-AROM"/>
    <property type="match status" value="1"/>
</dbReference>
<dbReference type="PANTHER" id="PTHR21090">
    <property type="entry name" value="AROM/DEHYDROQUINATE SYNTHASE"/>
    <property type="match status" value="1"/>
</dbReference>
<dbReference type="PANTHER" id="PTHR21090:SF5">
    <property type="entry name" value="PENTAFUNCTIONAL AROM POLYPEPTIDE"/>
    <property type="match status" value="1"/>
</dbReference>
<dbReference type="Pfam" id="PF01761">
    <property type="entry name" value="DHQ_synthase"/>
    <property type="match status" value="1"/>
</dbReference>
<dbReference type="Pfam" id="PF24621">
    <property type="entry name" value="DHQS_C"/>
    <property type="match status" value="1"/>
</dbReference>
<dbReference type="Pfam" id="PF01487">
    <property type="entry name" value="DHquinase_I"/>
    <property type="match status" value="1"/>
</dbReference>
<dbReference type="Pfam" id="PF00275">
    <property type="entry name" value="EPSP_synthase"/>
    <property type="match status" value="1"/>
</dbReference>
<dbReference type="Pfam" id="PF18317">
    <property type="entry name" value="SDH_C"/>
    <property type="match status" value="1"/>
</dbReference>
<dbReference type="Pfam" id="PF08501">
    <property type="entry name" value="Shikimate_dh_N"/>
    <property type="match status" value="1"/>
</dbReference>
<dbReference type="Pfam" id="PF01202">
    <property type="entry name" value="SKI"/>
    <property type="match status" value="1"/>
</dbReference>
<dbReference type="PIRSF" id="PIRSF000514">
    <property type="entry name" value="Pentafunct_AroM"/>
    <property type="match status" value="1"/>
</dbReference>
<dbReference type="PRINTS" id="PR01100">
    <property type="entry name" value="SHIKIMTKNASE"/>
</dbReference>
<dbReference type="SUPFAM" id="SSF51569">
    <property type="entry name" value="Aldolase"/>
    <property type="match status" value="1"/>
</dbReference>
<dbReference type="SUPFAM" id="SSF53223">
    <property type="entry name" value="Aminoacid dehydrogenase-like, N-terminal domain"/>
    <property type="match status" value="1"/>
</dbReference>
<dbReference type="SUPFAM" id="SSF56796">
    <property type="entry name" value="Dehydroquinate synthase-like"/>
    <property type="match status" value="1"/>
</dbReference>
<dbReference type="SUPFAM" id="SSF55205">
    <property type="entry name" value="EPT/RTPC-like"/>
    <property type="match status" value="1"/>
</dbReference>
<dbReference type="SUPFAM" id="SSF51735">
    <property type="entry name" value="NAD(P)-binding Rossmann-fold domains"/>
    <property type="match status" value="1"/>
</dbReference>
<dbReference type="SUPFAM" id="SSF52540">
    <property type="entry name" value="P-loop containing nucleoside triphosphate hydrolases"/>
    <property type="match status" value="1"/>
</dbReference>
<dbReference type="PROSITE" id="PS01028">
    <property type="entry name" value="DEHYDROQUINASE_I"/>
    <property type="match status" value="1"/>
</dbReference>
<dbReference type="PROSITE" id="PS00104">
    <property type="entry name" value="EPSP_SYNTHASE_1"/>
    <property type="match status" value="1"/>
</dbReference>
<dbReference type="PROSITE" id="PS00885">
    <property type="entry name" value="EPSP_SYNTHASE_2"/>
    <property type="match status" value="1"/>
</dbReference>
<dbReference type="PROSITE" id="PS01128">
    <property type="entry name" value="SHIKIMATE_KINASE"/>
    <property type="match status" value="1"/>
</dbReference>
<protein>
    <recommendedName>
        <fullName evidence="1">Pentafunctional AROM polypeptide</fullName>
    </recommendedName>
    <domain>
        <recommendedName>
            <fullName evidence="1">3-dehydroquinate synthase</fullName>
            <shortName evidence="1">DHQS</shortName>
            <ecNumber evidence="1">4.2.3.4</ecNumber>
        </recommendedName>
    </domain>
    <domain>
        <recommendedName>
            <fullName evidence="1">3-phosphoshikimate 1-carboxyvinyltransferase</fullName>
            <ecNumber evidence="1">2.5.1.19</ecNumber>
        </recommendedName>
        <alternativeName>
            <fullName evidence="1">5-enolpyruvylshikimate-3-phosphate synthase</fullName>
            <shortName evidence="1">EPSP synthase</shortName>
            <shortName evidence="1">EPSPS</shortName>
        </alternativeName>
    </domain>
    <domain>
        <recommendedName>
            <fullName evidence="1">Shikimate kinase</fullName>
            <shortName evidence="1">SK</shortName>
            <ecNumber evidence="1">2.7.1.71</ecNumber>
        </recommendedName>
    </domain>
    <domain>
        <recommendedName>
            <fullName evidence="1">3-dehydroquinate dehydratase</fullName>
            <shortName evidence="1">3-dehydroquinase</shortName>
            <ecNumber evidence="1">4.2.1.10</ecNumber>
        </recommendedName>
    </domain>
    <domain>
        <recommendedName>
            <fullName evidence="1">Shikimate dehydrogenase</fullName>
            <ecNumber evidence="1">1.1.1.25</ecNumber>
        </recommendedName>
    </domain>
</protein>
<accession>C6HCG7</accession>